<keyword id="KW-0021">Allosteric enzyme</keyword>
<keyword id="KW-0067">ATP-binding</keyword>
<keyword id="KW-0903">Direct protein sequencing</keyword>
<keyword id="KW-0324">Glycolysis</keyword>
<keyword id="KW-0418">Kinase</keyword>
<keyword id="KW-0460">Magnesium</keyword>
<keyword id="KW-0479">Metal-binding</keyword>
<keyword id="KW-0547">Nucleotide-binding</keyword>
<keyword id="KW-0630">Potassium</keyword>
<keyword id="KW-0670">Pyruvate</keyword>
<keyword id="KW-0808">Transferase</keyword>
<reference key="1">
    <citation type="journal article" date="1996" name="J. Bacteriol.">
        <title>The genes for phosphofructokinase and pyruvate kinase of Lactobacillus delbrueckii subsp. bulgaricus constitute an operon.</title>
        <authorList>
            <person name="Branny P."/>
            <person name="de la Torre F."/>
            <person name="Garel J.R."/>
        </authorList>
    </citation>
    <scope>NUCLEOTIDE SEQUENCE [GENOMIC DNA]</scope>
</reference>
<reference key="2">
    <citation type="journal article" date="1993" name="J. Bacteriol.">
        <title>Cloning, sequencing, and expression in Escherichia coli of the gene coding for phosphofructokinase in Lactobacillus bulgaricus.</title>
        <authorList>
            <person name="Branny P."/>
            <person name="de la Torre F."/>
            <person name="Garel J.R."/>
        </authorList>
    </citation>
    <scope>NUCLEOTIDE SEQUENCE [GENOMIC DNA] OF 1-60</scope>
</reference>
<reference key="3">
    <citation type="journal article" date="1993" name="Biochimie">
        <title>Pyruvate kinase from Lactobacillus bulgaricus: possible regulation by competition between strong and weak effectors.</title>
        <authorList>
            <person name="le Bras G."/>
            <person name="Garel J.R."/>
        </authorList>
    </citation>
    <scope>PROTEIN SEQUENCE OF 1-40</scope>
    <scope>CHARACTERIZATION</scope>
</reference>
<comment type="catalytic activity">
    <reaction>
        <text>pyruvate + ATP = phosphoenolpyruvate + ADP + H(+)</text>
        <dbReference type="Rhea" id="RHEA:18157"/>
        <dbReference type="ChEBI" id="CHEBI:15361"/>
        <dbReference type="ChEBI" id="CHEBI:15378"/>
        <dbReference type="ChEBI" id="CHEBI:30616"/>
        <dbReference type="ChEBI" id="CHEBI:58702"/>
        <dbReference type="ChEBI" id="CHEBI:456216"/>
        <dbReference type="EC" id="2.7.1.40"/>
    </reaction>
</comment>
<comment type="cofactor">
    <cofactor>
        <name>Mg(2+)</name>
        <dbReference type="ChEBI" id="CHEBI:18420"/>
    </cofactor>
</comment>
<comment type="cofactor">
    <cofactor>
        <name>K(+)</name>
        <dbReference type="ChEBI" id="CHEBI:29103"/>
    </cofactor>
</comment>
<comment type="activity regulation">
    <text>Strongly activated by glucose-6-phosphate, ribose-5-phosphate and fructose-6-phosphate. Weak activator AMP and weak inhibitor fructose-1,6-bisphosphate can act as strong inhibitors in the presence of strong activators.</text>
</comment>
<comment type="pathway">
    <text>Carbohydrate degradation; glycolysis; pyruvate from D-glyceraldehyde 3-phosphate: step 5/5.</text>
</comment>
<comment type="subunit">
    <text>Homotetramer.</text>
</comment>
<comment type="similarity">
    <text evidence="3">Belongs to the pyruvate kinase family.</text>
</comment>
<comment type="similarity">
    <text evidence="3">In the C-terminal section; belongs to the PEP-utilizing enzyme family.</text>
</comment>
<feature type="chain" id="PRO_0000112076" description="Pyruvate kinase">
    <location>
        <begin position="1"/>
        <end position="589"/>
    </location>
</feature>
<feature type="binding site" evidence="1">
    <location>
        <position position="32"/>
    </location>
    <ligand>
        <name>substrate</name>
    </ligand>
</feature>
<feature type="binding site" evidence="2">
    <location>
        <begin position="34"/>
        <end position="37"/>
    </location>
    <ligand>
        <name>ATP</name>
        <dbReference type="ChEBI" id="CHEBI:30616"/>
    </ligand>
</feature>
<feature type="binding site" evidence="1">
    <location>
        <position position="34"/>
    </location>
    <ligand>
        <name>K(+)</name>
        <dbReference type="ChEBI" id="CHEBI:29103"/>
    </ligand>
</feature>
<feature type="binding site" evidence="1">
    <location>
        <position position="36"/>
    </location>
    <ligand>
        <name>K(+)</name>
        <dbReference type="ChEBI" id="CHEBI:29103"/>
    </ligand>
</feature>
<feature type="binding site" evidence="1">
    <location>
        <position position="66"/>
    </location>
    <ligand>
        <name>K(+)</name>
        <dbReference type="ChEBI" id="CHEBI:29103"/>
    </ligand>
</feature>
<feature type="binding site" evidence="1">
    <location>
        <position position="67"/>
    </location>
    <ligand>
        <name>K(+)</name>
        <dbReference type="ChEBI" id="CHEBI:29103"/>
    </ligand>
</feature>
<feature type="binding site" evidence="2">
    <location>
        <position position="73"/>
    </location>
    <ligand>
        <name>ATP</name>
        <dbReference type="ChEBI" id="CHEBI:30616"/>
    </ligand>
</feature>
<feature type="binding site" evidence="2">
    <location>
        <position position="157"/>
    </location>
    <ligand>
        <name>ATP</name>
        <dbReference type="ChEBI" id="CHEBI:30616"/>
    </ligand>
</feature>
<feature type="binding site" evidence="1">
    <location>
        <position position="223"/>
    </location>
    <ligand>
        <name>Mg(2+)</name>
        <dbReference type="ChEBI" id="CHEBI:18420"/>
    </ligand>
</feature>
<feature type="binding site" evidence="1">
    <location>
        <position position="246"/>
    </location>
    <ligand>
        <name>substrate</name>
    </ligand>
</feature>
<feature type="binding site" evidence="1">
    <location>
        <position position="247"/>
    </location>
    <ligand>
        <name>Mg(2+)</name>
        <dbReference type="ChEBI" id="CHEBI:18420"/>
    </ligand>
</feature>
<feature type="binding site" evidence="1">
    <location>
        <position position="247"/>
    </location>
    <ligand>
        <name>substrate</name>
    </ligand>
</feature>
<feature type="binding site" evidence="1">
    <location>
        <position position="279"/>
    </location>
    <ligand>
        <name>substrate</name>
    </ligand>
</feature>
<feature type="site" description="Transition state stabilizer" evidence="1">
    <location>
        <position position="221"/>
    </location>
</feature>
<evidence type="ECO:0000250" key="1"/>
<evidence type="ECO:0000250" key="2">
    <source>
        <dbReference type="UniProtKB" id="P14618"/>
    </source>
</evidence>
<evidence type="ECO:0000305" key="3"/>
<accession>P34038</accession>
<gene>
    <name type="primary">pyk</name>
</gene>
<organism>
    <name type="scientific">Lactobacillus delbrueckii subsp. bulgaricus</name>
    <dbReference type="NCBI Taxonomy" id="1585"/>
    <lineage>
        <taxon>Bacteria</taxon>
        <taxon>Bacillati</taxon>
        <taxon>Bacillota</taxon>
        <taxon>Bacilli</taxon>
        <taxon>Lactobacillales</taxon>
        <taxon>Lactobacillaceae</taxon>
        <taxon>Lactobacillus</taxon>
    </lineage>
</organism>
<proteinExistence type="evidence at protein level"/>
<sequence length="589" mass="62920">MKKTKIVSTLGPASDDIETITKLAEAGANVFRFNFSHGNHEEHLARMNMVREVEKKTGKLLGIALDTKGAEIRTTDQEGGKFTINTGDEIRVSMDATKAGNKDMIHVTYPGLFDDTHVGGTVLIDDGAVGLTIKAKDEEKRELVCEAQNTGVIGSKKGVNAPGVEIRLPGITEKDTDDIRFGLKHGINFIFASFVRKAQDVLDIRALCEEANASYVKIFPKIESQEGIDNIDEILQVSDGLMVARGDMGVEIPFINVPFVQKTLIKKCNALGKPVITATQMLDSMQENPRPTRAEVTDVANAVLDGTDATMLSGESANGLYPVQSVQAMHDIDVRTEKELDTRNTLALQRFEEYKGSNVTEAIGESVVRTAQELGVKTIIAATSSGYTARMISKYRPDATIVALTFDEKIQHSLGIVWGVEPVLAKKPSNTDEMFEEAARVAKEHGFVKDGDLVIIVAGVPFGQSGTTNLMKLQIIGNQLAQGLGVGTGSVIGKAVVANSAEEANAKVHEGDILVAKTTDKDYMPAIKKASGMIVEASGLTSHAAVVGVSLGIPVVVGVADATSKIADGSTLTVDARRGAIYQGEVSNL</sequence>
<dbReference type="EC" id="2.7.1.40"/>
<dbReference type="EMBL" id="X71403">
    <property type="protein sequence ID" value="CAA50527.1"/>
    <property type="molecule type" value="Genomic_DNA"/>
</dbReference>
<dbReference type="PIR" id="B48663">
    <property type="entry name" value="B48663"/>
</dbReference>
<dbReference type="PIR" id="S35929">
    <property type="entry name" value="S35929"/>
</dbReference>
<dbReference type="RefSeq" id="WP_003619815.1">
    <property type="nucleotide sequence ID" value="NZ_RIST01000114.1"/>
</dbReference>
<dbReference type="SMR" id="P34038"/>
<dbReference type="OMA" id="RVHHIGE"/>
<dbReference type="UniPathway" id="UPA00109">
    <property type="reaction ID" value="UER00188"/>
</dbReference>
<dbReference type="GO" id="GO:0005524">
    <property type="term" value="F:ATP binding"/>
    <property type="evidence" value="ECO:0007669"/>
    <property type="project" value="UniProtKB-KW"/>
</dbReference>
<dbReference type="GO" id="GO:0016301">
    <property type="term" value="F:kinase activity"/>
    <property type="evidence" value="ECO:0007669"/>
    <property type="project" value="UniProtKB-KW"/>
</dbReference>
<dbReference type="GO" id="GO:0000287">
    <property type="term" value="F:magnesium ion binding"/>
    <property type="evidence" value="ECO:0007669"/>
    <property type="project" value="InterPro"/>
</dbReference>
<dbReference type="GO" id="GO:0030955">
    <property type="term" value="F:potassium ion binding"/>
    <property type="evidence" value="ECO:0007669"/>
    <property type="project" value="InterPro"/>
</dbReference>
<dbReference type="GO" id="GO:0004743">
    <property type="term" value="F:pyruvate kinase activity"/>
    <property type="evidence" value="ECO:0007669"/>
    <property type="project" value="UniProtKB-EC"/>
</dbReference>
<dbReference type="CDD" id="cd00288">
    <property type="entry name" value="Pyruvate_Kinase"/>
    <property type="match status" value="1"/>
</dbReference>
<dbReference type="FunFam" id="2.40.33.10:FF:000001">
    <property type="entry name" value="Pyruvate kinase"/>
    <property type="match status" value="1"/>
</dbReference>
<dbReference type="FunFam" id="3.20.20.60:FF:000025">
    <property type="entry name" value="Pyruvate kinase"/>
    <property type="match status" value="1"/>
</dbReference>
<dbReference type="FunFam" id="3.40.1380.20:FF:000007">
    <property type="entry name" value="Pyruvate kinase"/>
    <property type="match status" value="1"/>
</dbReference>
<dbReference type="FunFam" id="3.50.30.10:FF:000004">
    <property type="entry name" value="Pyruvate kinase"/>
    <property type="match status" value="1"/>
</dbReference>
<dbReference type="Gene3D" id="3.20.20.60">
    <property type="entry name" value="Phosphoenolpyruvate-binding domains"/>
    <property type="match status" value="1"/>
</dbReference>
<dbReference type="Gene3D" id="3.50.30.10">
    <property type="entry name" value="Phosphohistidine domain"/>
    <property type="match status" value="1"/>
</dbReference>
<dbReference type="Gene3D" id="2.40.33.10">
    <property type="entry name" value="PK beta-barrel domain-like"/>
    <property type="match status" value="1"/>
</dbReference>
<dbReference type="Gene3D" id="3.40.1380.20">
    <property type="entry name" value="Pyruvate kinase, C-terminal domain"/>
    <property type="match status" value="1"/>
</dbReference>
<dbReference type="InterPro" id="IPR008279">
    <property type="entry name" value="PEP-util_enz_mobile_dom"/>
</dbReference>
<dbReference type="InterPro" id="IPR001697">
    <property type="entry name" value="Pyr_Knase"/>
</dbReference>
<dbReference type="InterPro" id="IPR015813">
    <property type="entry name" value="Pyrv/PenolPyrv_kinase-like_dom"/>
</dbReference>
<dbReference type="InterPro" id="IPR040442">
    <property type="entry name" value="Pyrv_kinase-like_dom_sf"/>
</dbReference>
<dbReference type="InterPro" id="IPR011037">
    <property type="entry name" value="Pyrv_Knase-like_insert_dom_sf"/>
</dbReference>
<dbReference type="InterPro" id="IPR015793">
    <property type="entry name" value="Pyrv_Knase_brl"/>
</dbReference>
<dbReference type="InterPro" id="IPR015795">
    <property type="entry name" value="Pyrv_Knase_C"/>
</dbReference>
<dbReference type="InterPro" id="IPR036918">
    <property type="entry name" value="Pyrv_Knase_C_sf"/>
</dbReference>
<dbReference type="InterPro" id="IPR015806">
    <property type="entry name" value="Pyrv_Knase_insert_dom_sf"/>
</dbReference>
<dbReference type="NCBIfam" id="NF004491">
    <property type="entry name" value="PRK05826.1"/>
    <property type="match status" value="1"/>
</dbReference>
<dbReference type="NCBIfam" id="NF004978">
    <property type="entry name" value="PRK06354.1"/>
    <property type="match status" value="1"/>
</dbReference>
<dbReference type="NCBIfam" id="TIGR01064">
    <property type="entry name" value="pyruv_kin"/>
    <property type="match status" value="1"/>
</dbReference>
<dbReference type="PANTHER" id="PTHR11817">
    <property type="entry name" value="PYRUVATE KINASE"/>
    <property type="match status" value="1"/>
</dbReference>
<dbReference type="Pfam" id="PF00391">
    <property type="entry name" value="PEP-utilizers"/>
    <property type="match status" value="1"/>
</dbReference>
<dbReference type="Pfam" id="PF00224">
    <property type="entry name" value="PK"/>
    <property type="match status" value="1"/>
</dbReference>
<dbReference type="Pfam" id="PF02887">
    <property type="entry name" value="PK_C"/>
    <property type="match status" value="1"/>
</dbReference>
<dbReference type="PRINTS" id="PR01050">
    <property type="entry name" value="PYRUVTKNASE"/>
</dbReference>
<dbReference type="SUPFAM" id="SSF51621">
    <property type="entry name" value="Phosphoenolpyruvate/pyruvate domain"/>
    <property type="match status" value="1"/>
</dbReference>
<dbReference type="SUPFAM" id="SSF50800">
    <property type="entry name" value="PK beta-barrel domain-like"/>
    <property type="match status" value="1"/>
</dbReference>
<dbReference type="SUPFAM" id="SSF52935">
    <property type="entry name" value="PK C-terminal domain-like"/>
    <property type="match status" value="1"/>
</dbReference>
<protein>
    <recommendedName>
        <fullName>Pyruvate kinase</fullName>
        <shortName>PK</shortName>
        <ecNumber>2.7.1.40</ecNumber>
    </recommendedName>
</protein>
<name>KPYK_LACDE</name>